<accession>P23509</accession>
<sequence>MAASIGALKSSPSSNNCINERRNDSTRAVSSRNLSFSSSHLAGDKLMPVSSLRSQGVRFNVRRSPMIVSPKAVSDSQNSQTCLDPDASRSVLGIILGGGAGTRLYPLTKKRAKPAVPLGANYRLIDIPVSNCLNSNISKIYVLTQFNSASLNRHLSRAYASNMGGYKNEGFVEVLAAQQSPENPDWFQGTADAVRQYLWLFEEHTVLEYLILAGDHLYRMDYEKFIQAHRETDADITVAALPMDEKRATAFGLMKIDEEGRIIEFAEKPQGEQLQAMKVDTTILGLDDKRAKEMPFIASMGIYVISKDVMLNLLRDKFPGANDFGSEVIPGATSLGMRVQAYLYDGYWEDIGTIEAFYNANLGITKKPVPDFSFYDRSAPIYTQPRYLPPSKMLDADVTDSVIGEGCVIKNCKIHHSVVGLRSCISEGAIIEDSLLMGADYYETDADRKLLAAKGSVPIGIGKNCHIKRAIIDKNARIGDNVKIINKDNVQEAARETDGYFIKSGIVTVIKDALIPSGIII</sequence>
<organism>
    <name type="scientific">Solanum tuberosum</name>
    <name type="common">Potato</name>
    <dbReference type="NCBI Taxonomy" id="4113"/>
    <lineage>
        <taxon>Eukaryota</taxon>
        <taxon>Viridiplantae</taxon>
        <taxon>Streptophyta</taxon>
        <taxon>Embryophyta</taxon>
        <taxon>Tracheophyta</taxon>
        <taxon>Spermatophyta</taxon>
        <taxon>Magnoliopsida</taxon>
        <taxon>eudicotyledons</taxon>
        <taxon>Gunneridae</taxon>
        <taxon>Pentapetalae</taxon>
        <taxon>asterids</taxon>
        <taxon>lamiids</taxon>
        <taxon>Solanales</taxon>
        <taxon>Solanaceae</taxon>
        <taxon>Solanoideae</taxon>
        <taxon>Solaneae</taxon>
        <taxon>Solanum</taxon>
    </lineage>
</organism>
<reference key="1">
    <citation type="journal article" date="1991" name="Plant Mol. Biol.">
        <title>Comparison of the primary sequences of two potato tuber ADP-glucose pyrophosphorylase subunits.</title>
        <authorList>
            <person name="Nakata P.A."/>
            <person name="Greene T.W."/>
            <person name="Anderson J.M."/>
            <person name="Smith-White B.J."/>
            <person name="Okita T.W."/>
            <person name="Preiss J."/>
        </authorList>
    </citation>
    <scope>NUCLEOTIDE SEQUENCE</scope>
    <source>
        <strain>cv. Russet Burbank-0</strain>
        <tissue>Tuber</tissue>
    </source>
</reference>
<reference key="2">
    <citation type="journal article" date="1994" name="J. Biol. Chem.">
        <title>Structure and expression of the potato ADP-glucose pyrophosphorylase small subunit.</title>
        <authorList>
            <person name="Nakata P.A."/>
            <person name="Anderson J.M."/>
            <person name="Okita T.W."/>
        </authorList>
    </citation>
    <scope>NUCLEOTIDE SEQUENCE [GENOMIC DNA]</scope>
    <source>
        <strain>cv. Russet Burbank-0</strain>
        <tissue>Leaf</tissue>
    </source>
</reference>
<reference key="3">
    <citation type="journal article" date="1991" name="Plant Mol. Biol.">
        <title>Isolation and sequence analysis of a cDNA clone encoding a subunit of the ADP-glucose pyrophosphorylase of potato tuber amyloplasts.</title>
        <authorList>
            <person name="du Jardin P."/>
            <person name="Berhin A."/>
        </authorList>
    </citation>
    <scope>NUCLEOTIDE SEQUENCE [MRNA] OF 80-521</scope>
    <source>
        <strain>cv. Desiree</strain>
        <tissue>Tuber</tissue>
    </source>
</reference>
<reference key="4">
    <citation type="journal article" date="1990" name="Mol. Gen. Genet.">
        <title>One of two different ADP-glucose pyrophosphorylase genes from potato responds strongly to elevated levels of sucrose.</title>
        <authorList>
            <person name="Mueller-Roeber B.T."/>
            <person name="Kossmann J."/>
            <person name="Hannah L.C."/>
            <person name="Willmitzer L."/>
            <person name="Sonnewald U."/>
        </authorList>
    </citation>
    <scope>NUCLEOTIDE SEQUENCE OF 80-521</scope>
    <source>
        <strain>cv. Desiree</strain>
    </source>
</reference>
<feature type="transit peptide" description="Chloroplast" evidence="2">
    <location>
        <begin position="1"/>
        <end position="72"/>
    </location>
</feature>
<feature type="chain" id="PRO_0000011155" description="Glucose-1-phosphate adenylyltransferase small subunit, chloroplastic/amyloplastic">
    <location>
        <begin position="73"/>
        <end position="521"/>
    </location>
</feature>
<feature type="region of interest" description="Disordered" evidence="3">
    <location>
        <begin position="1"/>
        <end position="32"/>
    </location>
</feature>
<feature type="region of interest" description="Allosteric regulation" evidence="1">
    <location>
        <begin position="444"/>
        <end position="454"/>
    </location>
</feature>
<feature type="binding site" evidence="2">
    <location>
        <position position="268"/>
    </location>
    <ligand>
        <name>substrate</name>
    </ligand>
</feature>
<feature type="sequence variant">
    <original>I</original>
    <variation>V</variation>
    <location>
        <position position="520"/>
    </location>
</feature>
<feature type="sequence conflict" description="In Ref. 3; CAA39181." evidence="4" ref="3">
    <original>D</original>
    <variation>H</variation>
    <location>
        <position position="185"/>
    </location>
</feature>
<feature type="sequence conflict" description="In Ref. 3; CAA39181." evidence="4" ref="3">
    <original>P</original>
    <variation>S</variation>
    <location>
        <position position="390"/>
    </location>
</feature>
<feature type="helix" evidence="5">
    <location>
        <begin position="87"/>
        <end position="90"/>
    </location>
</feature>
<feature type="strand" evidence="5">
    <location>
        <begin position="91"/>
        <end position="96"/>
    </location>
</feature>
<feature type="turn" evidence="5">
    <location>
        <begin position="105"/>
        <end position="110"/>
    </location>
</feature>
<feature type="helix" evidence="5">
    <location>
        <begin position="113"/>
        <end position="115"/>
    </location>
</feature>
<feature type="turn" evidence="5">
    <location>
        <begin position="119"/>
        <end position="121"/>
    </location>
</feature>
<feature type="helix" evidence="5">
    <location>
        <begin position="126"/>
        <end position="134"/>
    </location>
</feature>
<feature type="strand" evidence="5">
    <location>
        <begin position="139"/>
        <end position="145"/>
    </location>
</feature>
<feature type="helix" evidence="5">
    <location>
        <begin position="149"/>
        <end position="158"/>
    </location>
</feature>
<feature type="strand" evidence="5">
    <location>
        <begin position="171"/>
        <end position="177"/>
    </location>
</feature>
<feature type="strand" evidence="6">
    <location>
        <begin position="180"/>
        <end position="182"/>
    </location>
</feature>
<feature type="helix" evidence="5">
    <location>
        <begin position="190"/>
        <end position="196"/>
    </location>
</feature>
<feature type="helix" evidence="5">
    <location>
        <begin position="198"/>
        <end position="201"/>
    </location>
</feature>
<feature type="strand" evidence="5">
    <location>
        <begin position="207"/>
        <end position="214"/>
    </location>
</feature>
<feature type="helix" evidence="5">
    <location>
        <begin position="222"/>
        <end position="231"/>
    </location>
</feature>
<feature type="strand" evidence="5">
    <location>
        <begin position="235"/>
        <end position="243"/>
    </location>
</feature>
<feature type="helix" evidence="5">
    <location>
        <begin position="245"/>
        <end position="248"/>
    </location>
</feature>
<feature type="strand" evidence="5">
    <location>
        <begin position="251"/>
        <end position="256"/>
    </location>
</feature>
<feature type="strand" evidence="5">
    <location>
        <begin position="260"/>
        <end position="268"/>
    </location>
</feature>
<feature type="helix" evidence="5">
    <location>
        <begin position="271"/>
        <end position="276"/>
    </location>
</feature>
<feature type="helix" evidence="5">
    <location>
        <begin position="281"/>
        <end position="284"/>
    </location>
</feature>
<feature type="helix" evidence="5">
    <location>
        <begin position="288"/>
        <end position="293"/>
    </location>
</feature>
<feature type="strand" evidence="5">
    <location>
        <begin position="296"/>
        <end position="306"/>
    </location>
</feature>
<feature type="helix" evidence="5">
    <location>
        <begin position="307"/>
        <end position="315"/>
    </location>
</feature>
<feature type="turn" evidence="5">
    <location>
        <begin position="324"/>
        <end position="327"/>
    </location>
</feature>
<feature type="helix" evidence="5">
    <location>
        <begin position="328"/>
        <end position="334"/>
    </location>
</feature>
<feature type="strand" evidence="5">
    <location>
        <begin position="339"/>
        <end position="343"/>
    </location>
</feature>
<feature type="helix" evidence="5">
    <location>
        <begin position="354"/>
        <end position="362"/>
    </location>
</feature>
<feature type="helix" evidence="5">
    <location>
        <begin position="363"/>
        <end position="365"/>
    </location>
</feature>
<feature type="strand" evidence="5">
    <location>
        <begin position="367"/>
        <end position="369"/>
    </location>
</feature>
<feature type="strand" evidence="5">
    <location>
        <begin position="377"/>
        <end position="379"/>
    </location>
</feature>
<feature type="strand" evidence="5">
    <location>
        <begin position="391"/>
        <end position="403"/>
    </location>
</feature>
<feature type="strand" evidence="5">
    <location>
        <begin position="408"/>
        <end position="416"/>
    </location>
</feature>
<feature type="strand" evidence="5">
    <location>
        <begin position="430"/>
        <end position="433"/>
    </location>
</feature>
<feature type="helix" evidence="5">
    <location>
        <begin position="445"/>
        <end position="452"/>
    </location>
</feature>
<feature type="turn" evidence="5">
    <location>
        <begin position="453"/>
        <end position="455"/>
    </location>
</feature>
<feature type="strand" evidence="5">
    <location>
        <begin position="459"/>
        <end position="461"/>
    </location>
</feature>
<feature type="strand" evidence="5">
    <location>
        <begin position="466"/>
        <end position="472"/>
    </location>
</feature>
<feature type="strand" evidence="5">
    <location>
        <begin position="493"/>
        <end position="495"/>
    </location>
</feature>
<feature type="helix" evidence="5">
    <location>
        <begin position="496"/>
        <end position="498"/>
    </location>
</feature>
<feature type="strand" evidence="5">
    <location>
        <begin position="500"/>
        <end position="503"/>
    </location>
</feature>
<feature type="strand" evidence="5">
    <location>
        <begin position="506"/>
        <end position="509"/>
    </location>
</feature>
<dbReference type="EC" id="2.7.7.27"/>
<dbReference type="EMBL" id="X61186">
    <property type="protein sequence ID" value="CAA43489.1"/>
    <property type="molecule type" value="mRNA"/>
</dbReference>
<dbReference type="EMBL" id="L36648">
    <property type="protein sequence ID" value="AAA66057.1"/>
    <property type="molecule type" value="Genomic_DNA"/>
</dbReference>
<dbReference type="EMBL" id="X55650">
    <property type="protein sequence ID" value="CAA39181.1"/>
    <property type="molecule type" value="mRNA"/>
</dbReference>
<dbReference type="EMBL" id="X55155">
    <property type="protein sequence ID" value="CAA38954.1"/>
    <property type="molecule type" value="mRNA"/>
</dbReference>
<dbReference type="PIR" id="A55317">
    <property type="entry name" value="A55317"/>
</dbReference>
<dbReference type="PIR" id="S13380">
    <property type="entry name" value="S13380"/>
</dbReference>
<dbReference type="PDB" id="1YP2">
    <property type="method" value="X-ray"/>
    <property type="resolution" value="2.11 A"/>
    <property type="chains" value="A/B/C/D=72-521"/>
</dbReference>
<dbReference type="PDB" id="1YP3">
    <property type="method" value="X-ray"/>
    <property type="resolution" value="2.60 A"/>
    <property type="chains" value="A/B/C/D=72-521"/>
</dbReference>
<dbReference type="PDB" id="1YP4">
    <property type="method" value="X-ray"/>
    <property type="resolution" value="2.30 A"/>
    <property type="chains" value="A/B/C/D=72-521"/>
</dbReference>
<dbReference type="PDBsum" id="1YP2"/>
<dbReference type="PDBsum" id="1YP3"/>
<dbReference type="PDBsum" id="1YP4"/>
<dbReference type="SMR" id="P23509"/>
<dbReference type="DIP" id="DIP-48347N"/>
<dbReference type="FunCoup" id="P23509">
    <property type="interactions" value="1135"/>
</dbReference>
<dbReference type="IntAct" id="P23509">
    <property type="interactions" value="1"/>
</dbReference>
<dbReference type="STRING" id="4113.P23509"/>
<dbReference type="PaxDb" id="4113-PGSC0003DMT400079823"/>
<dbReference type="eggNOG" id="KOG1322">
    <property type="taxonomic scope" value="Eukaryota"/>
</dbReference>
<dbReference type="InParanoid" id="P23509"/>
<dbReference type="BRENDA" id="2.7.7.27">
    <property type="organism ID" value="5757"/>
</dbReference>
<dbReference type="SABIO-RK" id="P23509"/>
<dbReference type="UniPathway" id="UPA00152"/>
<dbReference type="EvolutionaryTrace" id="P23509"/>
<dbReference type="Proteomes" id="UP000011115">
    <property type="component" value="Unassembled WGS sequence"/>
</dbReference>
<dbReference type="ExpressionAtlas" id="P23509">
    <property type="expression patterns" value="baseline and differential"/>
</dbReference>
<dbReference type="GO" id="GO:0009501">
    <property type="term" value="C:amyloplast"/>
    <property type="evidence" value="ECO:0007669"/>
    <property type="project" value="UniProtKB-SubCell"/>
</dbReference>
<dbReference type="GO" id="GO:0009507">
    <property type="term" value="C:chloroplast"/>
    <property type="evidence" value="ECO:0007669"/>
    <property type="project" value="UniProtKB-SubCell"/>
</dbReference>
<dbReference type="GO" id="GO:0005524">
    <property type="term" value="F:ATP binding"/>
    <property type="evidence" value="ECO:0007669"/>
    <property type="project" value="UniProtKB-KW"/>
</dbReference>
<dbReference type="GO" id="GO:0008878">
    <property type="term" value="F:glucose-1-phosphate adenylyltransferase activity"/>
    <property type="evidence" value="ECO:0007669"/>
    <property type="project" value="UniProtKB-EC"/>
</dbReference>
<dbReference type="GO" id="GO:0005978">
    <property type="term" value="P:glycogen biosynthetic process"/>
    <property type="evidence" value="ECO:0007669"/>
    <property type="project" value="InterPro"/>
</dbReference>
<dbReference type="GO" id="GO:0019252">
    <property type="term" value="P:starch biosynthetic process"/>
    <property type="evidence" value="ECO:0007669"/>
    <property type="project" value="UniProtKB-UniPathway"/>
</dbReference>
<dbReference type="CDD" id="cd02508">
    <property type="entry name" value="ADP_Glucose_PP"/>
    <property type="match status" value="1"/>
</dbReference>
<dbReference type="CDD" id="cd04651">
    <property type="entry name" value="LbH_G1P_AT_C"/>
    <property type="match status" value="1"/>
</dbReference>
<dbReference type="FunFam" id="2.160.10.10:FF:000010">
    <property type="entry name" value="Glucose-1-phosphate adenylyltransferase"/>
    <property type="match status" value="1"/>
</dbReference>
<dbReference type="FunFam" id="3.90.550.10:FF:000030">
    <property type="entry name" value="Glucose-1-phosphate adenylyltransferase"/>
    <property type="match status" value="1"/>
</dbReference>
<dbReference type="Gene3D" id="2.160.10.10">
    <property type="entry name" value="Hexapeptide repeat proteins"/>
    <property type="match status" value="1"/>
</dbReference>
<dbReference type="Gene3D" id="3.90.550.10">
    <property type="entry name" value="Spore Coat Polysaccharide Biosynthesis Protein SpsA, Chain A"/>
    <property type="match status" value="1"/>
</dbReference>
<dbReference type="InterPro" id="IPR011831">
    <property type="entry name" value="ADP-Glc_PPase"/>
</dbReference>
<dbReference type="InterPro" id="IPR005836">
    <property type="entry name" value="ADP_Glu_pyroP_CS"/>
</dbReference>
<dbReference type="InterPro" id="IPR005835">
    <property type="entry name" value="NTP_transferase_dom"/>
</dbReference>
<dbReference type="InterPro" id="IPR029044">
    <property type="entry name" value="Nucleotide-diphossugar_trans"/>
</dbReference>
<dbReference type="InterPro" id="IPR011004">
    <property type="entry name" value="Trimer_LpxA-like_sf"/>
</dbReference>
<dbReference type="NCBIfam" id="TIGR02091">
    <property type="entry name" value="glgC"/>
    <property type="match status" value="1"/>
</dbReference>
<dbReference type="NCBIfam" id="NF002772">
    <property type="entry name" value="PRK02862.1"/>
    <property type="match status" value="1"/>
</dbReference>
<dbReference type="PANTHER" id="PTHR43523:SF12">
    <property type="entry name" value="GLUCOSE-1-PHOSPHATE ADENYLYLTRANSFERASE LARGE SUBUNIT 1, CHLOROPLASTIC-RELATED"/>
    <property type="match status" value="1"/>
</dbReference>
<dbReference type="PANTHER" id="PTHR43523">
    <property type="entry name" value="GLUCOSE-1-PHOSPHATE ADENYLYLTRANSFERASE-RELATED"/>
    <property type="match status" value="1"/>
</dbReference>
<dbReference type="Pfam" id="PF25247">
    <property type="entry name" value="LbH_GLGC"/>
    <property type="match status" value="1"/>
</dbReference>
<dbReference type="Pfam" id="PF00483">
    <property type="entry name" value="NTP_transferase"/>
    <property type="match status" value="1"/>
</dbReference>
<dbReference type="SUPFAM" id="SSF53448">
    <property type="entry name" value="Nucleotide-diphospho-sugar transferases"/>
    <property type="match status" value="1"/>
</dbReference>
<dbReference type="SUPFAM" id="SSF51161">
    <property type="entry name" value="Trimeric LpxA-like enzymes"/>
    <property type="match status" value="1"/>
</dbReference>
<dbReference type="PROSITE" id="PS00808">
    <property type="entry name" value="ADP_GLC_PYROPHOSPH_1"/>
    <property type="match status" value="1"/>
</dbReference>
<dbReference type="PROSITE" id="PS00809">
    <property type="entry name" value="ADP_GLC_PYROPHOSPH_2"/>
    <property type="match status" value="1"/>
</dbReference>
<dbReference type="PROSITE" id="PS00810">
    <property type="entry name" value="ADP_GLC_PYROPHOSPH_3"/>
    <property type="match status" value="1"/>
</dbReference>
<name>GLGS_SOLTU</name>
<protein>
    <recommendedName>
        <fullName>Glucose-1-phosphate adenylyltransferase small subunit, chloroplastic/amyloplastic</fullName>
        <ecNumber>2.7.7.27</ecNumber>
    </recommendedName>
    <alternativeName>
        <fullName>ADP-glucose pyrophosphorylase</fullName>
    </alternativeName>
    <alternativeName>
        <fullName>ADP-glucose synthase</fullName>
    </alternativeName>
    <alternativeName>
        <fullName>AGPase B</fullName>
    </alternativeName>
    <alternativeName>
        <fullName>Alpha-D-glucose-1-phosphate adenyl transferase</fullName>
    </alternativeName>
</protein>
<comment type="function">
    <text>This protein plays a role in synthesis of starch. It catalyzes the synthesis of the activated glycosyl donor, ADP-glucose from Glc-1-P and ATP.</text>
</comment>
<comment type="catalytic activity">
    <reaction>
        <text>alpha-D-glucose 1-phosphate + ATP + H(+) = ADP-alpha-D-glucose + diphosphate</text>
        <dbReference type="Rhea" id="RHEA:12120"/>
        <dbReference type="ChEBI" id="CHEBI:15378"/>
        <dbReference type="ChEBI" id="CHEBI:30616"/>
        <dbReference type="ChEBI" id="CHEBI:33019"/>
        <dbReference type="ChEBI" id="CHEBI:57498"/>
        <dbReference type="ChEBI" id="CHEBI:58601"/>
        <dbReference type="EC" id="2.7.7.27"/>
    </reaction>
</comment>
<comment type="activity regulation">
    <text>Activated by 3'phosphoglycerate, inhibited by orthophosphate. Allosteric regulation.</text>
</comment>
<comment type="pathway">
    <text>Glycan biosynthesis; starch biosynthesis.</text>
</comment>
<comment type="subunit">
    <text>Heterotetramer.</text>
</comment>
<comment type="interaction">
    <interactant intactId="EBI-15812097">
        <id>P23509</id>
    </interactant>
    <interactant intactId="EBI-15812120">
        <id>Q00081</id>
        <label>AGPS1</label>
    </interactant>
    <organismsDiffer>false</organismsDiffer>
    <experiments>2</experiments>
</comment>
<comment type="subcellular location">
    <subcellularLocation>
        <location>Plastid</location>
        <location>Chloroplast</location>
    </subcellularLocation>
    <subcellularLocation>
        <location>Plastid</location>
        <location>Amyloplast</location>
    </subcellularLocation>
    <text>Found in the chloroplast in leaf. Found in the plastid in the developing endosperm.</text>
</comment>
<comment type="tissue specificity">
    <text>Leaves and tubers.</text>
</comment>
<comment type="similarity">
    <text evidence="4">Belongs to the bacterial/plant glucose-1-phosphate adenylyltransferase family.</text>
</comment>
<keyword id="KW-0002">3D-structure</keyword>
<keyword id="KW-0021">Allosteric enzyme</keyword>
<keyword id="KW-0035">Amyloplast</keyword>
<keyword id="KW-0067">ATP-binding</keyword>
<keyword id="KW-0150">Chloroplast</keyword>
<keyword id="KW-0547">Nucleotide-binding</keyword>
<keyword id="KW-0548">Nucleotidyltransferase</keyword>
<keyword id="KW-0934">Plastid</keyword>
<keyword id="KW-1185">Reference proteome</keyword>
<keyword id="KW-0750">Starch biosynthesis</keyword>
<keyword id="KW-0808">Transferase</keyword>
<keyword id="KW-0809">Transit peptide</keyword>
<proteinExistence type="evidence at protein level"/>
<evidence type="ECO:0000250" key="1"/>
<evidence type="ECO:0000255" key="2"/>
<evidence type="ECO:0000256" key="3">
    <source>
        <dbReference type="SAM" id="MobiDB-lite"/>
    </source>
</evidence>
<evidence type="ECO:0000305" key="4"/>
<evidence type="ECO:0007829" key="5">
    <source>
        <dbReference type="PDB" id="1YP2"/>
    </source>
</evidence>
<evidence type="ECO:0007829" key="6">
    <source>
        <dbReference type="PDB" id="1YP3"/>
    </source>
</evidence>